<name>SYE1_ANAPZ</name>
<evidence type="ECO:0000255" key="1">
    <source>
        <dbReference type="HAMAP-Rule" id="MF_00022"/>
    </source>
</evidence>
<gene>
    <name evidence="1" type="primary">gltX1</name>
    <name type="synonym">gltX-1</name>
    <name type="ordered locus">APH_0072</name>
</gene>
<protein>
    <recommendedName>
        <fullName evidence="1">Glutamate--tRNA ligase 1</fullName>
        <ecNumber evidence="1">6.1.1.17</ecNumber>
    </recommendedName>
    <alternativeName>
        <fullName evidence="1">Glutamyl-tRNA synthetase 1</fullName>
        <shortName evidence="1">GluRS 1</shortName>
    </alternativeName>
</protein>
<organism>
    <name type="scientific">Anaplasma phagocytophilum (strain HZ)</name>
    <dbReference type="NCBI Taxonomy" id="212042"/>
    <lineage>
        <taxon>Bacteria</taxon>
        <taxon>Pseudomonadati</taxon>
        <taxon>Pseudomonadota</taxon>
        <taxon>Alphaproteobacteria</taxon>
        <taxon>Rickettsiales</taxon>
        <taxon>Anaplasmataceae</taxon>
        <taxon>Anaplasma</taxon>
        <taxon>phagocytophilum group</taxon>
    </lineage>
</organism>
<dbReference type="EC" id="6.1.1.17" evidence="1"/>
<dbReference type="EMBL" id="CP000235">
    <property type="protein sequence ID" value="ABD44338.1"/>
    <property type="molecule type" value="Genomic_DNA"/>
</dbReference>
<dbReference type="SMR" id="Q2GLP6"/>
<dbReference type="STRING" id="212042.APH_0072"/>
<dbReference type="PaxDb" id="212042-APH_0072"/>
<dbReference type="EnsemblBacteria" id="ABD44338">
    <property type="protein sequence ID" value="ABD44338"/>
    <property type="gene ID" value="APH_0072"/>
</dbReference>
<dbReference type="KEGG" id="aph:APH_0072"/>
<dbReference type="eggNOG" id="COG0008">
    <property type="taxonomic scope" value="Bacteria"/>
</dbReference>
<dbReference type="eggNOG" id="COG1384">
    <property type="taxonomic scope" value="Bacteria"/>
</dbReference>
<dbReference type="HOGENOM" id="CLU_015768_6_1_5"/>
<dbReference type="Proteomes" id="UP000001943">
    <property type="component" value="Chromosome"/>
</dbReference>
<dbReference type="GO" id="GO:0005737">
    <property type="term" value="C:cytoplasm"/>
    <property type="evidence" value="ECO:0007669"/>
    <property type="project" value="UniProtKB-SubCell"/>
</dbReference>
<dbReference type="GO" id="GO:0005524">
    <property type="term" value="F:ATP binding"/>
    <property type="evidence" value="ECO:0007669"/>
    <property type="project" value="UniProtKB-UniRule"/>
</dbReference>
<dbReference type="GO" id="GO:0004818">
    <property type="term" value="F:glutamate-tRNA ligase activity"/>
    <property type="evidence" value="ECO:0007669"/>
    <property type="project" value="UniProtKB-UniRule"/>
</dbReference>
<dbReference type="GO" id="GO:0000049">
    <property type="term" value="F:tRNA binding"/>
    <property type="evidence" value="ECO:0007669"/>
    <property type="project" value="InterPro"/>
</dbReference>
<dbReference type="GO" id="GO:0006424">
    <property type="term" value="P:glutamyl-tRNA aminoacylation"/>
    <property type="evidence" value="ECO:0007669"/>
    <property type="project" value="UniProtKB-UniRule"/>
</dbReference>
<dbReference type="Gene3D" id="1.10.10.350">
    <property type="match status" value="1"/>
</dbReference>
<dbReference type="Gene3D" id="3.40.50.620">
    <property type="entry name" value="HUPs"/>
    <property type="match status" value="1"/>
</dbReference>
<dbReference type="HAMAP" id="MF_00022">
    <property type="entry name" value="Glu_tRNA_synth_type1"/>
    <property type="match status" value="1"/>
</dbReference>
<dbReference type="InterPro" id="IPR045462">
    <property type="entry name" value="aa-tRNA-synth_I_cd-bd"/>
</dbReference>
<dbReference type="InterPro" id="IPR020751">
    <property type="entry name" value="aa-tRNA-synth_I_codon-bd_sub2"/>
</dbReference>
<dbReference type="InterPro" id="IPR001412">
    <property type="entry name" value="aa-tRNA-synth_I_CS"/>
</dbReference>
<dbReference type="InterPro" id="IPR008925">
    <property type="entry name" value="aa_tRNA-synth_I_cd-bd_sf"/>
</dbReference>
<dbReference type="InterPro" id="IPR004527">
    <property type="entry name" value="Glu-tRNA-ligase_bac/mito"/>
</dbReference>
<dbReference type="InterPro" id="IPR000924">
    <property type="entry name" value="Glu/Gln-tRNA-synth"/>
</dbReference>
<dbReference type="InterPro" id="IPR020058">
    <property type="entry name" value="Glu/Gln-tRNA-synth_Ib_cat-dom"/>
</dbReference>
<dbReference type="InterPro" id="IPR049940">
    <property type="entry name" value="GluQ/Sye"/>
</dbReference>
<dbReference type="InterPro" id="IPR014729">
    <property type="entry name" value="Rossmann-like_a/b/a_fold"/>
</dbReference>
<dbReference type="NCBIfam" id="TIGR00464">
    <property type="entry name" value="gltX_bact"/>
    <property type="match status" value="1"/>
</dbReference>
<dbReference type="PANTHER" id="PTHR43311">
    <property type="entry name" value="GLUTAMATE--TRNA LIGASE"/>
    <property type="match status" value="1"/>
</dbReference>
<dbReference type="PANTHER" id="PTHR43311:SF2">
    <property type="entry name" value="GLUTAMATE--TRNA LIGASE, MITOCHONDRIAL-RELATED"/>
    <property type="match status" value="1"/>
</dbReference>
<dbReference type="Pfam" id="PF19269">
    <property type="entry name" value="Anticodon_2"/>
    <property type="match status" value="1"/>
</dbReference>
<dbReference type="Pfam" id="PF00749">
    <property type="entry name" value="tRNA-synt_1c"/>
    <property type="match status" value="1"/>
</dbReference>
<dbReference type="PRINTS" id="PR00987">
    <property type="entry name" value="TRNASYNTHGLU"/>
</dbReference>
<dbReference type="SUPFAM" id="SSF48163">
    <property type="entry name" value="An anticodon-binding domain of class I aminoacyl-tRNA synthetases"/>
    <property type="match status" value="1"/>
</dbReference>
<dbReference type="SUPFAM" id="SSF52374">
    <property type="entry name" value="Nucleotidylyl transferase"/>
    <property type="match status" value="1"/>
</dbReference>
<dbReference type="PROSITE" id="PS00178">
    <property type="entry name" value="AA_TRNA_LIGASE_I"/>
    <property type="match status" value="1"/>
</dbReference>
<proteinExistence type="inferred from homology"/>
<comment type="function">
    <text evidence="1">Catalyzes the attachment of glutamate to tRNA(Glu) in a two-step reaction: glutamate is first activated by ATP to form Glu-AMP and then transferred to the acceptor end of tRNA(Glu).</text>
</comment>
<comment type="catalytic activity">
    <reaction evidence="1">
        <text>tRNA(Glu) + L-glutamate + ATP = L-glutamyl-tRNA(Glu) + AMP + diphosphate</text>
        <dbReference type="Rhea" id="RHEA:23540"/>
        <dbReference type="Rhea" id="RHEA-COMP:9663"/>
        <dbReference type="Rhea" id="RHEA-COMP:9680"/>
        <dbReference type="ChEBI" id="CHEBI:29985"/>
        <dbReference type="ChEBI" id="CHEBI:30616"/>
        <dbReference type="ChEBI" id="CHEBI:33019"/>
        <dbReference type="ChEBI" id="CHEBI:78442"/>
        <dbReference type="ChEBI" id="CHEBI:78520"/>
        <dbReference type="ChEBI" id="CHEBI:456215"/>
        <dbReference type="EC" id="6.1.1.17"/>
    </reaction>
</comment>
<comment type="subunit">
    <text evidence="1">Monomer.</text>
</comment>
<comment type="subcellular location">
    <subcellularLocation>
        <location evidence="1">Cytoplasm</location>
    </subcellularLocation>
</comment>
<comment type="similarity">
    <text evidence="1">Belongs to the class-I aminoacyl-tRNA synthetase family. Glutamate--tRNA ligase type 1 subfamily.</text>
</comment>
<keyword id="KW-0030">Aminoacyl-tRNA synthetase</keyword>
<keyword id="KW-0067">ATP-binding</keyword>
<keyword id="KW-0963">Cytoplasm</keyword>
<keyword id="KW-0436">Ligase</keyword>
<keyword id="KW-0547">Nucleotide-binding</keyword>
<keyword id="KW-0648">Protein biosynthesis</keyword>
<reference key="1">
    <citation type="journal article" date="2006" name="PLoS Genet.">
        <title>Comparative genomics of emerging human ehrlichiosis agents.</title>
        <authorList>
            <person name="Dunning Hotopp J.C."/>
            <person name="Lin M."/>
            <person name="Madupu R."/>
            <person name="Crabtree J."/>
            <person name="Angiuoli S.V."/>
            <person name="Eisen J.A."/>
            <person name="Seshadri R."/>
            <person name="Ren Q."/>
            <person name="Wu M."/>
            <person name="Utterback T.R."/>
            <person name="Smith S."/>
            <person name="Lewis M."/>
            <person name="Khouri H."/>
            <person name="Zhang C."/>
            <person name="Niu H."/>
            <person name="Lin Q."/>
            <person name="Ohashi N."/>
            <person name="Zhi N."/>
            <person name="Nelson W.C."/>
            <person name="Brinkac L.M."/>
            <person name="Dodson R.J."/>
            <person name="Rosovitz M.J."/>
            <person name="Sundaram J.P."/>
            <person name="Daugherty S.C."/>
            <person name="Davidsen T."/>
            <person name="Durkin A.S."/>
            <person name="Gwinn M.L."/>
            <person name="Haft D.H."/>
            <person name="Selengut J.D."/>
            <person name="Sullivan S.A."/>
            <person name="Zafar N."/>
            <person name="Zhou L."/>
            <person name="Benahmed F."/>
            <person name="Forberger H."/>
            <person name="Halpin R."/>
            <person name="Mulligan S."/>
            <person name="Robinson J."/>
            <person name="White O."/>
            <person name="Rikihisa Y."/>
            <person name="Tettelin H."/>
        </authorList>
    </citation>
    <scope>NUCLEOTIDE SEQUENCE [LARGE SCALE GENOMIC DNA]</scope>
    <source>
        <strain>HZ</strain>
    </source>
</reference>
<sequence>MITRFAPSPTGYMHVGNARTALICWLYARSKSGKFLLRIDDTDASRSEHKYIEGIKQDLDWLALDWDSCFQQSTRLERYQEVFDLLLDQGVIYPCYETQEELDMKRSMMLKMGLPPIYDRSALKMTEQEMQACSGRLPYFRLKIDQSREITWEDEVRGRVSFQAKNISDPIIKRTDGTYTYMFPSVVDDIDFAITHIIRGEDHVSNTATQICIFDILKAKVPVFVHLPLVHFRDAKISKRVGSDDIEIRHLRDIGMEPMAIKSYLARMGTSLPVEPQENHDVLVESFDIRTFNQAPIKFSLDDISRLNSRIVQCLSFDKVKDRFVQQGLECTEEFWYLIRDNVNTVEDVREWINICNSQITTAIDDKDRTFISEAKALLPDTELDEEVCKAWLQRIKETSNRSTRDVLLPLRLATTGVTTGPGLAQLLPFIGRAEVVRRLECASKGHNAN</sequence>
<feature type="chain" id="PRO_0000237337" description="Glutamate--tRNA ligase 1">
    <location>
        <begin position="1"/>
        <end position="450"/>
    </location>
</feature>
<feature type="short sequence motif" description="'HIGH' region" evidence="1">
    <location>
        <begin position="7"/>
        <end position="17"/>
    </location>
</feature>
<feature type="short sequence motif" description="'KMSKS' region" evidence="1">
    <location>
        <begin position="236"/>
        <end position="240"/>
    </location>
</feature>
<feature type="binding site" evidence="1">
    <location>
        <position position="239"/>
    </location>
    <ligand>
        <name>ATP</name>
        <dbReference type="ChEBI" id="CHEBI:30616"/>
    </ligand>
</feature>
<accession>Q2GLP6</accession>